<feature type="chain" id="PRO_1000196223" description="Large ribosomal subunit protein bL9">
    <location>
        <begin position="1"/>
        <end position="148"/>
    </location>
</feature>
<keyword id="KW-0687">Ribonucleoprotein</keyword>
<keyword id="KW-0689">Ribosomal protein</keyword>
<keyword id="KW-0694">RNA-binding</keyword>
<keyword id="KW-0699">rRNA-binding</keyword>
<sequence length="148" mass="16356">MKVIFLKDVKGKGKKGEVKNVPDGYANNFLLKQGLAAEATNSSMKTLEAQKRKEEKDAAAELESAKQLKETLEKLTVELKAKSGEGGRLFGSITSKQIVDAMQKSHKIKLDKRKFEMDDAIRALGYTNVTVKLHPQVTATVKVHVSEQ</sequence>
<evidence type="ECO:0000255" key="1">
    <source>
        <dbReference type="HAMAP-Rule" id="MF_00503"/>
    </source>
</evidence>
<evidence type="ECO:0000305" key="2"/>
<organism>
    <name type="scientific">Bacillus cereus (strain 03BB102)</name>
    <dbReference type="NCBI Taxonomy" id="572264"/>
    <lineage>
        <taxon>Bacteria</taxon>
        <taxon>Bacillati</taxon>
        <taxon>Bacillota</taxon>
        <taxon>Bacilli</taxon>
        <taxon>Bacillales</taxon>
        <taxon>Bacillaceae</taxon>
        <taxon>Bacillus</taxon>
        <taxon>Bacillus cereus group</taxon>
    </lineage>
</organism>
<comment type="function">
    <text evidence="1">Binds to the 23S rRNA.</text>
</comment>
<comment type="similarity">
    <text evidence="1">Belongs to the bacterial ribosomal protein bL9 family.</text>
</comment>
<reference key="1">
    <citation type="submission" date="2009-02" db="EMBL/GenBank/DDBJ databases">
        <title>Genome sequence of Bacillus cereus 03BB102.</title>
        <authorList>
            <person name="Dodson R.J."/>
            <person name="Jackson P."/>
            <person name="Munk A.C."/>
            <person name="Brettin T."/>
            <person name="Bruce D."/>
            <person name="Detter C."/>
            <person name="Tapia R."/>
            <person name="Han C."/>
            <person name="Sutton G."/>
            <person name="Sims D."/>
        </authorList>
    </citation>
    <scope>NUCLEOTIDE SEQUENCE [LARGE SCALE GENOMIC DNA]</scope>
    <source>
        <strain>03BB102</strain>
    </source>
</reference>
<gene>
    <name evidence="1" type="primary">rplI</name>
    <name type="ordered locus">BCA_5624</name>
</gene>
<proteinExistence type="inferred from homology"/>
<name>RL9_BACC3</name>
<dbReference type="EMBL" id="CP001407">
    <property type="protein sequence ID" value="ACO29910.1"/>
    <property type="molecule type" value="Genomic_DNA"/>
</dbReference>
<dbReference type="RefSeq" id="WP_000864235.1">
    <property type="nucleotide sequence ID" value="NZ_CP009318.1"/>
</dbReference>
<dbReference type="SMR" id="C1ER62"/>
<dbReference type="GeneID" id="83639160"/>
<dbReference type="KEGG" id="bcx:BCA_5624"/>
<dbReference type="PATRIC" id="fig|572264.18.peg.46"/>
<dbReference type="Proteomes" id="UP000002210">
    <property type="component" value="Chromosome"/>
</dbReference>
<dbReference type="GO" id="GO:1990904">
    <property type="term" value="C:ribonucleoprotein complex"/>
    <property type="evidence" value="ECO:0007669"/>
    <property type="project" value="UniProtKB-KW"/>
</dbReference>
<dbReference type="GO" id="GO:0005840">
    <property type="term" value="C:ribosome"/>
    <property type="evidence" value="ECO:0007669"/>
    <property type="project" value="UniProtKB-KW"/>
</dbReference>
<dbReference type="GO" id="GO:0019843">
    <property type="term" value="F:rRNA binding"/>
    <property type="evidence" value="ECO:0007669"/>
    <property type="project" value="UniProtKB-UniRule"/>
</dbReference>
<dbReference type="GO" id="GO:0003735">
    <property type="term" value="F:structural constituent of ribosome"/>
    <property type="evidence" value="ECO:0007669"/>
    <property type="project" value="InterPro"/>
</dbReference>
<dbReference type="GO" id="GO:0006412">
    <property type="term" value="P:translation"/>
    <property type="evidence" value="ECO:0007669"/>
    <property type="project" value="UniProtKB-UniRule"/>
</dbReference>
<dbReference type="FunFam" id="3.10.430.100:FF:000002">
    <property type="entry name" value="50S ribosomal protein L9"/>
    <property type="match status" value="1"/>
</dbReference>
<dbReference type="FunFam" id="3.40.5.10:FF:000002">
    <property type="entry name" value="50S ribosomal protein L9"/>
    <property type="match status" value="1"/>
</dbReference>
<dbReference type="Gene3D" id="3.10.430.100">
    <property type="entry name" value="Ribosomal protein L9, C-terminal domain"/>
    <property type="match status" value="1"/>
</dbReference>
<dbReference type="Gene3D" id="3.40.5.10">
    <property type="entry name" value="Ribosomal protein L9, N-terminal domain"/>
    <property type="match status" value="1"/>
</dbReference>
<dbReference type="HAMAP" id="MF_00503">
    <property type="entry name" value="Ribosomal_bL9"/>
    <property type="match status" value="1"/>
</dbReference>
<dbReference type="InterPro" id="IPR000244">
    <property type="entry name" value="Ribosomal_bL9"/>
</dbReference>
<dbReference type="InterPro" id="IPR009027">
    <property type="entry name" value="Ribosomal_bL9/RNase_H1_N"/>
</dbReference>
<dbReference type="InterPro" id="IPR020594">
    <property type="entry name" value="Ribosomal_bL9_bac/chp"/>
</dbReference>
<dbReference type="InterPro" id="IPR020069">
    <property type="entry name" value="Ribosomal_bL9_C"/>
</dbReference>
<dbReference type="InterPro" id="IPR036791">
    <property type="entry name" value="Ribosomal_bL9_C_sf"/>
</dbReference>
<dbReference type="InterPro" id="IPR020070">
    <property type="entry name" value="Ribosomal_bL9_N"/>
</dbReference>
<dbReference type="InterPro" id="IPR036935">
    <property type="entry name" value="Ribosomal_bL9_N_sf"/>
</dbReference>
<dbReference type="NCBIfam" id="TIGR00158">
    <property type="entry name" value="L9"/>
    <property type="match status" value="1"/>
</dbReference>
<dbReference type="PANTHER" id="PTHR21368">
    <property type="entry name" value="50S RIBOSOMAL PROTEIN L9"/>
    <property type="match status" value="1"/>
</dbReference>
<dbReference type="Pfam" id="PF03948">
    <property type="entry name" value="Ribosomal_L9_C"/>
    <property type="match status" value="1"/>
</dbReference>
<dbReference type="Pfam" id="PF01281">
    <property type="entry name" value="Ribosomal_L9_N"/>
    <property type="match status" value="1"/>
</dbReference>
<dbReference type="SUPFAM" id="SSF55658">
    <property type="entry name" value="L9 N-domain-like"/>
    <property type="match status" value="1"/>
</dbReference>
<dbReference type="SUPFAM" id="SSF55653">
    <property type="entry name" value="Ribosomal protein L9 C-domain"/>
    <property type="match status" value="1"/>
</dbReference>
<dbReference type="PROSITE" id="PS00651">
    <property type="entry name" value="RIBOSOMAL_L9"/>
    <property type="match status" value="1"/>
</dbReference>
<accession>C1ER62</accession>
<protein>
    <recommendedName>
        <fullName evidence="1">Large ribosomal subunit protein bL9</fullName>
    </recommendedName>
    <alternativeName>
        <fullName evidence="2">50S ribosomal protein L9</fullName>
    </alternativeName>
</protein>